<reference key="1">
    <citation type="journal article" date="1992" name="J. Biol. Chem.">
        <title>The alpha subunit of meprin A. Molecular cloning and sequencing, differential expression in inbred mouse strains, and evidence for divergent evolution of the alpha and beta subunits.</title>
        <authorList>
            <person name="Jiang W."/>
            <person name="Gorbea C.M."/>
            <person name="Flannery A.V."/>
            <person name="Beynon R.J."/>
            <person name="Grant G.A."/>
            <person name="Bond J.S."/>
        </authorList>
    </citation>
    <scope>NUCLEOTIDE SEQUENCE [MRNA]</scope>
    <scope>PROTEIN SEQUENCE OF 65-103; 107-122; 273-292; 314-348; 370-375; 377-386; 389-398 AND 527-557</scope>
    <source>
        <strain>C3H/He</strain>
        <strain>C57BL/6J</strain>
        <tissue>Kidney</tissue>
    </source>
</reference>
<reference key="2">
    <citation type="journal article" date="2009" name="PLoS Biol.">
        <title>Lineage-specific biology revealed by a finished genome assembly of the mouse.</title>
        <authorList>
            <person name="Church D.M."/>
            <person name="Goodstadt L."/>
            <person name="Hillier L.W."/>
            <person name="Zody M.C."/>
            <person name="Goldstein S."/>
            <person name="She X."/>
            <person name="Bult C.J."/>
            <person name="Agarwala R."/>
            <person name="Cherry J.L."/>
            <person name="DiCuccio M."/>
            <person name="Hlavina W."/>
            <person name="Kapustin Y."/>
            <person name="Meric P."/>
            <person name="Maglott D."/>
            <person name="Birtle Z."/>
            <person name="Marques A.C."/>
            <person name="Graves T."/>
            <person name="Zhou S."/>
            <person name="Teague B."/>
            <person name="Potamousis K."/>
            <person name="Churas C."/>
            <person name="Place M."/>
            <person name="Herschleb J."/>
            <person name="Runnheim R."/>
            <person name="Forrest D."/>
            <person name="Amos-Landgraf J."/>
            <person name="Schwartz D.C."/>
            <person name="Cheng Z."/>
            <person name="Lindblad-Toh K."/>
            <person name="Eichler E.E."/>
            <person name="Ponting C.P."/>
        </authorList>
    </citation>
    <scope>NUCLEOTIDE SEQUENCE [LARGE SCALE GENOMIC DNA]</scope>
    <source>
        <strain>C57BL/6J</strain>
    </source>
</reference>
<reference key="3">
    <citation type="journal article" date="2004" name="Genome Res.">
        <title>The status, quality, and expansion of the NIH full-length cDNA project: the Mammalian Gene Collection (MGC).</title>
        <authorList>
            <consortium name="The MGC Project Team"/>
        </authorList>
    </citation>
    <scope>NUCLEOTIDE SEQUENCE [LARGE SCALE MRNA]</scope>
    <source>
        <strain>FVB/N</strain>
        <tissue>Kidney</tissue>
    </source>
</reference>
<reference key="4">
    <citation type="journal article" date="1996" name="Biochem. J.">
        <title>Characterization of the soluble, secreted form of urinary meprin.</title>
        <authorList>
            <person name="Beynon R.J."/>
            <person name="Oliver S."/>
            <person name="Robertson D.H.L."/>
        </authorList>
    </citation>
    <scope>PROTEIN SEQUENCE OF 21-25 AND 65-69</scope>
</reference>
<reference key="5">
    <citation type="journal article" date="1997" name="Gene">
        <title>Correlation of the exon/intron organization to the secondary structures of the protease domain of mouse meprin alpha subunit.</title>
        <authorList>
            <person name="Jiang W."/>
            <person name="Flannery A.V."/>
        </authorList>
    </citation>
    <scope>NUCLEOTIDE SEQUENCE [GENOMIC DNA] OF 62-258</scope>
    <source>
        <strain>129</strain>
    </source>
</reference>
<reference key="6">
    <citation type="journal article" date="1991" name="J. Biol. Chem.">
        <title>The astacin family of metalloendopeptidases.</title>
        <authorList>
            <person name="Dumermuth E."/>
            <person name="Sterchi E.E."/>
            <person name="Jiang W."/>
            <person name="Wolz R.L."/>
            <person name="Bond J.S."/>
            <person name="Flannery A.V."/>
            <person name="Beynon R.J."/>
        </authorList>
    </citation>
    <scope>NUCLEOTIDE SEQUENCE [MRNA] OF 64-262</scope>
</reference>
<reference key="7">
    <citation type="journal article" date="1991" name="J. Biol. Chem.">
        <title>Meprin-A and -B. Cell surface endopeptidases of the mouse kidney.</title>
        <authorList>
            <person name="Kounnas M.Z."/>
            <person name="Wolz R.L."/>
            <person name="Gorbea C.M."/>
            <person name="Bond J.S."/>
        </authorList>
    </citation>
    <scope>PROTEIN SEQUENCE OF 65-72; 315-348 AND 529-546</scope>
    <scope>ACTIVITY REGULATION</scope>
    <scope>BIOPHYSICOCHEMICAL PROPERTIES</scope>
    <scope>GLYCOSYLATION</scope>
    <source>
        <strain>ICR</strain>
        <tissue>Kidney</tissue>
    </source>
</reference>
<reference key="8">
    <citation type="journal article" date="1991" name="Arch. Biochem. Biophys.">
        <title>Homo- and heterotetrameric forms of the membrane-bound metalloendopeptidases meprin A and B.</title>
        <authorList>
            <person name="Gorbea C.M."/>
            <person name="Flannery A.V."/>
            <person name="Bond J.S."/>
        </authorList>
    </citation>
    <scope>SUBUNIT</scope>
</reference>
<reference key="9">
    <citation type="journal article" date="1991" name="Biochemistry">
        <title>Mapping the active site of meprin-A with peptide substrates and inhibitors.</title>
        <authorList>
            <person name="Wolz R.L."/>
            <person name="Harris R.B."/>
            <person name="Bond J.S."/>
        </authorList>
    </citation>
    <scope>CATALYTIC ACTIVITY</scope>
    <scope>ACTIVITY REGULATION</scope>
    <scope>BIOPHYSICOCHEMICAL PROPERTIES</scope>
</reference>
<reference key="10">
    <citation type="journal article" date="2001" name="J. Biol. Chem.">
        <title>Marked differences between metalloproteases meprin A and B in substrate and peptide bond specificity.</title>
        <authorList>
            <person name="Bertenshaw G.P."/>
            <person name="Turk B.E."/>
            <person name="Hubbard S.J."/>
            <person name="Matters G.L."/>
            <person name="Bylander J.E."/>
            <person name="Crisman J.M."/>
            <person name="Cantley L.C."/>
            <person name="Bond J.S."/>
        </authorList>
    </citation>
    <scope>CATALYTIC ACTIVITY</scope>
</reference>
<reference key="11">
    <citation type="journal article" date="2005" name="J. Immunol.">
        <title>Mannan-binding protein blocks the activation of metalloproteases meprin alpha and beta.</title>
        <authorList>
            <person name="Hirano M."/>
            <person name="Ma B.Y."/>
            <person name="Kawasaki N."/>
            <person name="Okimura K."/>
            <person name="Baba M."/>
            <person name="Nakagawa T."/>
            <person name="Miwa K."/>
            <person name="Kawasaki N."/>
            <person name="Oka S."/>
            <person name="Kawasaki T."/>
        </authorList>
    </citation>
    <scope>INTERACTION WITH MBL2</scope>
</reference>
<reference key="12">
    <citation type="journal article" date="2006" name="J. Biol. Chem.">
        <title>Protease domain glycans affect oligomerization, disulfide bond formation, and stability of the meprin A metalloprotease homo-oligomer.</title>
        <authorList>
            <person name="Ishmael S.S."/>
            <person name="Ishmael F.T."/>
            <person name="Jones A.D."/>
            <person name="Bond J.S."/>
        </authorList>
    </citation>
    <scope>SUBUNIT</scope>
    <scope>GLYCOSYLATION AT ASN-28; ASN-139; ASN-221; ASN-257; ASN-317; ASN-413; ASN-439; ASN-533 AND ASN-540</scope>
    <scope>MUTAGENESIS OF ASN-139; SER-141; ASN-221; ASN-257 AND THR-259</scope>
</reference>
<reference key="13">
    <citation type="journal article" date="2007" name="Biol. Chem.">
        <title>Human and mouse homo-oligomeric meprin A metalloendopeptidase: substrate and inhibitor specificities.</title>
        <authorList>
            <person name="Bylander J.E."/>
            <person name="Bertenshaw G.P."/>
            <person name="Matters G.L."/>
            <person name="Hubbard S.J."/>
            <person name="Bond J.S."/>
        </authorList>
    </citation>
    <scope>ACTIVITY REGULATION</scope>
    <scope>BIOPHYSICOCHEMICAL PROPERTIES</scope>
</reference>
<reference key="14">
    <citation type="journal article" date="2010" name="Cell">
        <title>A tissue-specific atlas of mouse protein phosphorylation and expression.</title>
        <authorList>
            <person name="Huttlin E.L."/>
            <person name="Jedrychowski M.P."/>
            <person name="Elias J.E."/>
            <person name="Goswami T."/>
            <person name="Rad R."/>
            <person name="Beausoleil S.A."/>
            <person name="Villen J."/>
            <person name="Haas W."/>
            <person name="Sowa M.E."/>
            <person name="Gygi S.P."/>
        </authorList>
    </citation>
    <scope>IDENTIFICATION BY MASS SPECTROMETRY [LARGE SCALE ANALYSIS]</scope>
    <source>
        <tissue>Kidney</tissue>
    </source>
</reference>
<reference key="15">
    <citation type="journal article" date="1993" name="Eur. J. Biochem.">
        <title>Implications of the three-dimensional structure of astacin for the structure and function of the astacin family of zinc-endopeptidases.</title>
        <authorList>
            <person name="Stoecker W."/>
            <person name="Gomis-Rueth F.-X."/>
            <person name="Bode W."/>
            <person name="Zwilling R."/>
        </authorList>
    </citation>
    <scope>3D-STRUCTURE MODELING</scope>
</reference>
<evidence type="ECO:0000255" key="1"/>
<evidence type="ECO:0000255" key="2">
    <source>
        <dbReference type="PROSITE-ProRule" id="PRU00076"/>
    </source>
</evidence>
<evidence type="ECO:0000255" key="3">
    <source>
        <dbReference type="PROSITE-ProRule" id="PRU00128"/>
    </source>
</evidence>
<evidence type="ECO:0000255" key="4">
    <source>
        <dbReference type="PROSITE-ProRule" id="PRU00129"/>
    </source>
</evidence>
<evidence type="ECO:0000255" key="5">
    <source>
        <dbReference type="PROSITE-ProRule" id="PRU01211"/>
    </source>
</evidence>
<evidence type="ECO:0000256" key="6">
    <source>
        <dbReference type="SAM" id="MobiDB-lite"/>
    </source>
</evidence>
<evidence type="ECO:0000269" key="7">
    <source>
    </source>
</evidence>
<evidence type="ECO:0000269" key="8">
    <source>
    </source>
</evidence>
<evidence type="ECO:0000269" key="9">
    <source>
    </source>
</evidence>
<evidence type="ECO:0000269" key="10">
    <source>
    </source>
</evidence>
<evidence type="ECO:0000269" key="11">
    <source>
    </source>
</evidence>
<evidence type="ECO:0000269" key="12">
    <source>
    </source>
</evidence>
<evidence type="ECO:0000269" key="13">
    <source>
    </source>
</evidence>
<evidence type="ECO:0000269" key="14">
    <source>
    </source>
</evidence>
<evidence type="ECO:0000269" key="15">
    <source>
    </source>
</evidence>
<evidence type="ECO:0000305" key="16"/>
<organism>
    <name type="scientific">Mus musculus</name>
    <name type="common">Mouse</name>
    <dbReference type="NCBI Taxonomy" id="10090"/>
    <lineage>
        <taxon>Eukaryota</taxon>
        <taxon>Metazoa</taxon>
        <taxon>Chordata</taxon>
        <taxon>Craniata</taxon>
        <taxon>Vertebrata</taxon>
        <taxon>Euteleostomi</taxon>
        <taxon>Mammalia</taxon>
        <taxon>Eutheria</taxon>
        <taxon>Euarchontoglires</taxon>
        <taxon>Glires</taxon>
        <taxon>Rodentia</taxon>
        <taxon>Myomorpha</taxon>
        <taxon>Muroidea</taxon>
        <taxon>Muridae</taxon>
        <taxon>Murinae</taxon>
        <taxon>Mus</taxon>
        <taxon>Mus</taxon>
    </lineage>
</organism>
<feature type="signal peptide" evidence="15">
    <location>
        <begin position="1"/>
        <end position="20"/>
    </location>
</feature>
<feature type="propeptide" id="PRO_0000028879" evidence="8 13 15">
    <location>
        <begin position="21"/>
        <end position="64"/>
    </location>
</feature>
<feature type="chain" id="PRO_0000028880" description="Meprin A subunit alpha">
    <location>
        <begin position="65"/>
        <end position="747"/>
    </location>
</feature>
<feature type="topological domain" description="Extracellular" evidence="1">
    <location>
        <begin position="65"/>
        <end position="713"/>
    </location>
</feature>
<feature type="transmembrane region" description="Helical" evidence="1">
    <location>
        <begin position="714"/>
        <end position="741"/>
    </location>
</feature>
<feature type="topological domain" description="Cytoplasmic" evidence="1">
    <location>
        <begin position="742"/>
        <end position="747"/>
    </location>
</feature>
<feature type="domain" description="Peptidase M12A" evidence="5">
    <location>
        <begin position="65"/>
        <end position="259"/>
    </location>
</feature>
<feature type="domain" description="MAM" evidence="3">
    <location>
        <begin position="263"/>
        <end position="432"/>
    </location>
</feature>
<feature type="domain" description="MATH" evidence="4">
    <location>
        <begin position="433"/>
        <end position="594"/>
    </location>
</feature>
<feature type="domain" description="EGF-like" evidence="2">
    <location>
        <begin position="671"/>
        <end position="711"/>
    </location>
</feature>
<feature type="region of interest" description="Disordered" evidence="6">
    <location>
        <begin position="638"/>
        <end position="663"/>
    </location>
</feature>
<feature type="active site" evidence="5">
    <location>
        <position position="155"/>
    </location>
</feature>
<feature type="binding site" evidence="5">
    <location>
        <position position="154"/>
    </location>
    <ligand>
        <name>Zn(2+)</name>
        <dbReference type="ChEBI" id="CHEBI:29105"/>
        <note>catalytic</note>
    </ligand>
</feature>
<feature type="binding site" evidence="5">
    <location>
        <position position="158"/>
    </location>
    <ligand>
        <name>Zn(2+)</name>
        <dbReference type="ChEBI" id="CHEBI:29105"/>
        <note>catalytic</note>
    </ligand>
</feature>
<feature type="binding site" evidence="5">
    <location>
        <position position="164"/>
    </location>
    <ligand>
        <name>Zn(2+)</name>
        <dbReference type="ChEBI" id="CHEBI:29105"/>
        <note>catalytic</note>
    </ligand>
</feature>
<feature type="site" description="Not glycosylated">
    <location>
        <position position="601"/>
    </location>
</feature>
<feature type="glycosylation site" description="N-linked (GlcNAc...) asparagine" evidence="10">
    <location>
        <position position="28"/>
    </location>
</feature>
<feature type="glycosylation site" description="N-linked (GlcNAc...) asparagine" evidence="10">
    <location>
        <position position="139"/>
    </location>
</feature>
<feature type="glycosylation site" description="N-linked (GlcNAc...) asparagine" evidence="10">
    <location>
        <position position="221"/>
    </location>
</feature>
<feature type="glycosylation site" description="N-linked (GlcNAc...) asparagine" evidence="10">
    <location>
        <position position="257"/>
    </location>
</feature>
<feature type="glycosylation site" description="N-linked (GlcNAc...) asparagine" evidence="10">
    <location>
        <position position="317"/>
    </location>
</feature>
<feature type="glycosylation site" description="N-linked (GlcNAc...) asparagine" evidence="10">
    <location>
        <position position="413"/>
    </location>
</feature>
<feature type="glycosylation site" description="N-linked (GlcNAc...) asparagine" evidence="10">
    <location>
        <position position="439"/>
    </location>
</feature>
<feature type="glycosylation site" description="N-linked (GlcNAc...) asparagine" evidence="10">
    <location>
        <position position="533"/>
    </location>
</feature>
<feature type="glycosylation site" description="N-linked (GlcNAc...) asparagine" evidence="10">
    <location>
        <position position="540"/>
    </location>
</feature>
<feature type="disulfide bond" evidence="5">
    <location>
        <begin position="106"/>
        <end position="258"/>
    </location>
</feature>
<feature type="disulfide bond" evidence="5">
    <location>
        <begin position="127"/>
        <end position="146"/>
    </location>
</feature>
<feature type="disulfide bond" evidence="2">
    <location>
        <begin position="268"/>
        <end position="430"/>
    </location>
</feature>
<feature type="disulfide bond" description="Interchain" evidence="2">
    <location>
        <position position="276"/>
    </location>
</feature>
<feature type="disulfide bond" description="Interchain" evidence="2">
    <location>
        <position position="307"/>
    </location>
</feature>
<feature type="disulfide bond" evidence="2">
    <location>
        <begin position="675"/>
        <end position="686"/>
    </location>
</feature>
<feature type="disulfide bond" evidence="2">
    <location>
        <begin position="680"/>
        <end position="695"/>
    </location>
</feature>
<feature type="disulfide bond" evidence="2">
    <location>
        <begin position="697"/>
        <end position="710"/>
    </location>
</feature>
<feature type="mutagenesis site" description="Increased susceptibility to heat-inactivation. Forms homodimers and oligomers; when associated with Q-221. Inactive, impaired ability to form homodimers or oligomers; when associated with Q-257 or Q-221 and Q-257." evidence="10">
    <original>N</original>
    <variation>Q</variation>
    <location>
        <position position="139"/>
    </location>
</feature>
<feature type="mutagenesis site" description="Impaired ability to form homodimers or oligomers; when associated with A-259." evidence="10">
    <original>S</original>
    <variation>A</variation>
    <location>
        <position position="141"/>
    </location>
</feature>
<feature type="mutagenesis site" description="Increased susceptibility to heat-inactivation. Forms homodimers and oligomers; when associated with Q-139 or Q-257. Inactive, impaired ability to form homodimers or oligomers; when associated with Q-139 and Q-257." evidence="10">
    <original>N</original>
    <variation>Q</variation>
    <location>
        <position position="221"/>
    </location>
</feature>
<feature type="mutagenesis site" description="Increased susceptibility to heat-inactivation. Forms homodimers and oligomers; when associated with Q-221. Inactive, impaired ability to form homodimers or oligomers; when associated with Q-139 or Q-139 and Q-221." evidence="10">
    <original>N</original>
    <variation>Q</variation>
    <location>
        <position position="257"/>
    </location>
</feature>
<feature type="mutagenesis site" description="Impaired ability to form homodimers or oligomers; when associated with A-141." evidence="10">
    <original>T</original>
    <variation>A</variation>
    <location>
        <position position="259"/>
    </location>
</feature>
<feature type="sequence conflict" description="In Ref. 1; AAA75354." evidence="16" ref="1">
    <original>F</original>
    <variation>L</variation>
    <location>
        <position position="482"/>
    </location>
</feature>
<feature type="sequence conflict" description="In Ref. 7; AA sequence." evidence="16" ref="7">
    <original>N</original>
    <variation>I</variation>
    <location>
        <position position="533"/>
    </location>
</feature>
<feature type="sequence conflict" description="In Ref. 7; AA sequence." evidence="16" ref="7">
    <original>N</original>
    <variation>S</variation>
    <location>
        <position position="540"/>
    </location>
</feature>
<feature type="sequence conflict" description="In Ref. 7; AA sequence." evidence="16" ref="7">
    <original>W</original>
    <variation>T</variation>
    <location>
        <position position="545"/>
    </location>
</feature>
<gene>
    <name type="primary">Mep1a</name>
</gene>
<proteinExistence type="evidence at protein level"/>
<sequence>MLWIQPACLLSLIFSAHIAAVSIKHLLNGSDHDTDVGEQKDIFEINLAAGLNLFQGDILLPRTRNAMRDPSSRWKLPIPYILADNLELNAKGAILHAFEMFRLKSCVDFKPYEGESSYIIFQKLSGCWSMIGDQQVGQNISIGEGCDFKATIEHEILHALGFFHEQSRTDRDDYVNIWWDQIITDYEHNFNTYDDNTITDLNTPYDYESLMHYGPFSFNKNESIPTITTKIPEFNTIIGQLPDFSAIDLIRLNRMYNCTATHTLLDHCDFEKTNVCGMIQGTRDDADWAHGDSSQPEQVDHTLVGQCKGAGYFMFFNTSLGARGEAALLESRILYPKRKQQCLQFFYKMTGSPADRFEVWVRRDDNAGKVRQLAKIQTFQGDSDHNWKIAHVTLNEEKKFRYVFLGTKGDPGNSSGGIYLDDITLTETPCPAGVWTIRNISQILENTVKGDKLVSPRFYNSEGYGVGVTLYPNGRITSNSGFLGLTFHLYSGDNDAILEWPVENRQAIMTILDQEADTRNRMSLTLMFTTSKNQTSSAINGSVIWDRPSKVGVYDKDCDCFRSLDWGWGQAISHQLLKRRNFLKGDSLIIFVDFKDLTHLNRTEVPASARSTMPRGLLLQGQESPALGESSRKAMLEESLPSSLGQRHPSRQKRSVENTGPMEDHNWPQYFRDPCDPNPCQNEGTCVNVKGMASCRCVSGHAFFYAGERCQAMHVHGSLLGLLIGCIAGLIFLTFVTFSTTNGKLRQ</sequence>
<name>MEP1A_MOUSE</name>
<comment type="catalytic activity">
    <reaction evidence="7 12">
        <text>Hydrolysis of protein and peptide substrates preferentially on carboxyl side of hydrophobic residues.</text>
        <dbReference type="EC" id="3.4.24.18"/>
    </reaction>
</comment>
<comment type="cofactor">
    <cofactor evidence="5">
        <name>Zn(2+)</name>
        <dbReference type="ChEBI" id="CHEBI:29105"/>
    </cofactor>
    <text evidence="5">Binds 1 zinc ion per subunit.</text>
</comment>
<comment type="activity regulation">
    <text evidence="11 12 13">Inhibited by metal ion chelators EDTA and 1,10-phenanthroline, bradykinin analogs, cysteine, CONA65, and several hydroxamate compounds, particularly tyrosine hydroxamate. Not inhibited by 3,4-dichloroisocourmarin, soybean trypsin inhibitor, or the cysteine proteinase inhibitors iodoacetic acid and E-64.</text>
</comment>
<comment type="biophysicochemical properties">
    <kinetics>
        <KM evidence="11 12 13">29.6 uM for GRP</KM>
        <KM evidence="11 12 13">67.2 uM for PTH 12-34</KM>
        <KM evidence="11 12 13">111 uM for secretin</KM>
        <KM evidence="11 12 13">30.6 uM for substance P</KM>
        <KM evidence="11 12 13">156 uM for LHRH</KM>
        <KM evidence="11 12 13">22.3 uM for alpha-MSH</KM>
        <KM evidence="11 12 13">101 uM for bradykinin</KM>
        <KM evidence="11 12 13">290 uM for Arg-Pro-Pro-Gly-Npa-Ser-Pro-Phe-Arg</KM>
        <KM evidence="11 12 13">331 uM for Arg-Pro-Pro-Gly-Npa-Ala-Pro-Phe-Arg</KM>
        <KM evidence="11 12 13">174 uM for Arg-Pro-Pro-Gly-Npa-Arg-Pro-Phe-Arg</KM>
        <KM evidence="11 12 13">226 uM for Arg-Pro-Pro-Gly-Npa-Phe-Pro-Phe-Arg</KM>
        <KM evidence="11 12 13">182 uM for Arg-Pro-Pro-Gly-Npa-Lys-Pro-Phe-Arg</KM>
        <KM evidence="11 12 13">339 uM for Arg-Pro-Pro-Gly-Npa-Glu-Pro-Phe-Arg</KM>
        <KM evidence="11 12 13">366 uM for 2ABz-Arg-Pro-Gly-Phe-Ser-Pro-Npa-Arg</KM>
        <KM evidence="11 12 13">296 uM for 2ABz-Arg-Pro-Ile-Phe-Ser-Pro-Npa-Arg</KM>
        <KM evidence="11 12 13">183 uM for 2ABz-Arg-Hyp-Gly-Phe-Ser-Pro-Npa-Arg</KM>
        <KM evidence="11 12 13">220 uM for 2ABz-Arg-Gly-Pro-Phe-Ser-Pro-Npa-Arg</KM>
        <KM evidence="11 12 13">1380 uM for 2ABz-Arg-Pro-Gly-Ala-Ser-Pro-Npa-Arg</KM>
        <KM evidence="11 12 13">1220 uM for 2ABz-Arg-Pro-Gly-Glu-Ser-Pro-Npa-Arg</KM>
        <KM evidence="11 12 13">402 uM for 2ABz-Arg-Pro-Gly-Lys-Ser-Pro-Npa-Arg</KM>
        <KM evidence="11 12 13">2460 uM for 2ABz-Arg-Pro-Gly-Leu-Ser-Pro-Npa-Arg</KM>
    </kinetics>
    <temperatureDependence>
        <text evidence="11 12 13">The half-life at 58 degrees Celsius is 50 minutes.</text>
    </temperatureDependence>
</comment>
<comment type="subunit">
    <text evidence="9 10 14">Homotetramer consisting of disulfide-linked alpha subunits, homooligomer consisting of disulfide-linked alpha subunit homodimers, or heterotetramer of two alpha and two beta subunits formed by non-covalent association of two disulfide-linked heterodimers. Genetic factors determine which oligomer(s) will be formed (strain-specific). Interacts with MBL2 through its carbohydrate moiety. This interaction may inhibit its catalytic activity.</text>
</comment>
<comment type="subcellular location">
    <subcellularLocation>
        <location>Membrane</location>
        <topology>Single-pass type I membrane protein</topology>
    </subcellularLocation>
</comment>
<comment type="tissue specificity">
    <text>Kidney, intestinal brush borders and salivary ducts.</text>
</comment>
<comment type="PTM">
    <text evidence="10 13">N-glycosylated; contains GlcNAc, galactose, mannose and a small amount of fucose.</text>
</comment>
<comment type="sequence caution" evidence="16">
    <conflict type="erroneous initiation">
        <sequence resource="EMBL-CDS" id="AAA75354"/>
    </conflict>
    <text>Extended N-terminus.</text>
</comment>
<comment type="sequence caution" evidence="16">
    <conflict type="erroneous initiation">
        <sequence resource="EMBL-CDS" id="AAH15258"/>
    </conflict>
    <text>Extended N-terminus.</text>
</comment>
<dbReference type="EC" id="3.4.24.18"/>
<dbReference type="EMBL" id="M74897">
    <property type="protein sequence ID" value="AAA75354.1"/>
    <property type="status" value="ALT_INIT"/>
    <property type="molecule type" value="mRNA"/>
</dbReference>
<dbReference type="EMBL" id="CT010585">
    <property type="status" value="NOT_ANNOTATED_CDS"/>
    <property type="molecule type" value="Genomic_DNA"/>
</dbReference>
<dbReference type="EMBL" id="BC015258">
    <property type="protein sequence ID" value="AAH15258.1"/>
    <property type="status" value="ALT_INIT"/>
    <property type="molecule type" value="mRNA"/>
</dbReference>
<dbReference type="EMBL" id="U62765">
    <property type="protein sequence ID" value="AAC53194.1"/>
    <property type="molecule type" value="Genomic_DNA"/>
</dbReference>
<dbReference type="PIR" id="A40195">
    <property type="entry name" value="A40195"/>
</dbReference>
<dbReference type="RefSeq" id="NP_032611.2">
    <property type="nucleotide sequence ID" value="NM_008585.2"/>
</dbReference>
<dbReference type="RefSeq" id="XP_006523814.1">
    <property type="nucleotide sequence ID" value="XM_006523751.3"/>
</dbReference>
<dbReference type="SMR" id="P28825"/>
<dbReference type="BioGRID" id="201396">
    <property type="interactions" value="2"/>
</dbReference>
<dbReference type="FunCoup" id="P28825">
    <property type="interactions" value="598"/>
</dbReference>
<dbReference type="IntAct" id="P28825">
    <property type="interactions" value="1"/>
</dbReference>
<dbReference type="MINT" id="P28825"/>
<dbReference type="STRING" id="10090.ENSMUSP00000024707"/>
<dbReference type="MEROPS" id="M12.002"/>
<dbReference type="GlyCosmos" id="P28825">
    <property type="glycosylation" value="9 sites, 11 glycans"/>
</dbReference>
<dbReference type="GlyGen" id="P28825">
    <property type="glycosylation" value="9 sites"/>
</dbReference>
<dbReference type="iPTMnet" id="P28825"/>
<dbReference type="PhosphoSitePlus" id="P28825"/>
<dbReference type="jPOST" id="P28825"/>
<dbReference type="PaxDb" id="10090-ENSMUSP00000024707"/>
<dbReference type="PeptideAtlas" id="P28825"/>
<dbReference type="ProteomicsDB" id="295924"/>
<dbReference type="DNASU" id="17287"/>
<dbReference type="Ensembl" id="ENSMUST00000117137.8">
    <property type="protein sequence ID" value="ENSMUSP00000113838.2"/>
    <property type="gene ID" value="ENSMUSG00000023914.17"/>
</dbReference>
<dbReference type="GeneID" id="17287"/>
<dbReference type="KEGG" id="mmu:17287"/>
<dbReference type="UCSC" id="uc008cpc.1">
    <property type="organism name" value="mouse"/>
</dbReference>
<dbReference type="AGR" id="MGI:96963"/>
<dbReference type="CTD" id="4224"/>
<dbReference type="MGI" id="MGI:96963">
    <property type="gene designation" value="Mep1a"/>
</dbReference>
<dbReference type="VEuPathDB" id="HostDB:ENSMUSG00000023914"/>
<dbReference type="eggNOG" id="KOG3714">
    <property type="taxonomic scope" value="Eukaryota"/>
</dbReference>
<dbReference type="GeneTree" id="ENSGT00950000183111"/>
<dbReference type="HOGENOM" id="CLU_021966_1_0_1"/>
<dbReference type="InParanoid" id="P28825"/>
<dbReference type="OMA" id="FEMFRLR"/>
<dbReference type="OrthoDB" id="291007at2759"/>
<dbReference type="PhylomeDB" id="P28825"/>
<dbReference type="TreeFam" id="TF315280"/>
<dbReference type="BRENDA" id="3.4.24.18">
    <property type="organism ID" value="3474"/>
</dbReference>
<dbReference type="SABIO-RK" id="P28825"/>
<dbReference type="BioGRID-ORCS" id="17287">
    <property type="hits" value="1 hit in 65 CRISPR screens"/>
</dbReference>
<dbReference type="ChiTaRS" id="Mep1a">
    <property type="organism name" value="mouse"/>
</dbReference>
<dbReference type="PRO" id="PR:P28825"/>
<dbReference type="Proteomes" id="UP000000589">
    <property type="component" value="Chromosome 17"/>
</dbReference>
<dbReference type="RNAct" id="P28825">
    <property type="molecule type" value="protein"/>
</dbReference>
<dbReference type="Bgee" id="ENSMUSG00000023914">
    <property type="expression patterns" value="Expressed in right kidney and 47 other cell types or tissues"/>
</dbReference>
<dbReference type="ExpressionAtlas" id="P28825">
    <property type="expression patterns" value="baseline and differential"/>
</dbReference>
<dbReference type="GO" id="GO:0016020">
    <property type="term" value="C:membrane"/>
    <property type="evidence" value="ECO:0000314"/>
    <property type="project" value="MGI"/>
</dbReference>
<dbReference type="GO" id="GO:0017090">
    <property type="term" value="C:meprin A complex"/>
    <property type="evidence" value="ECO:0007669"/>
    <property type="project" value="Ensembl"/>
</dbReference>
<dbReference type="GO" id="GO:0005886">
    <property type="term" value="C:plasma membrane"/>
    <property type="evidence" value="ECO:0000266"/>
    <property type="project" value="MGI"/>
</dbReference>
<dbReference type="GO" id="GO:0070573">
    <property type="term" value="F:metallodipeptidase activity"/>
    <property type="evidence" value="ECO:0000266"/>
    <property type="project" value="MGI"/>
</dbReference>
<dbReference type="GO" id="GO:0004222">
    <property type="term" value="F:metalloendopeptidase activity"/>
    <property type="evidence" value="ECO:0007669"/>
    <property type="project" value="UniProtKB-EC"/>
</dbReference>
<dbReference type="GO" id="GO:0008237">
    <property type="term" value="F:metallopeptidase activity"/>
    <property type="evidence" value="ECO:0000266"/>
    <property type="project" value="MGI"/>
</dbReference>
<dbReference type="GO" id="GO:0008270">
    <property type="term" value="F:zinc ion binding"/>
    <property type="evidence" value="ECO:0007669"/>
    <property type="project" value="InterPro"/>
</dbReference>
<dbReference type="GO" id="GO:0038004">
    <property type="term" value="P:epidermal growth factor receptor ligand maturation"/>
    <property type="evidence" value="ECO:0000266"/>
    <property type="project" value="MGI"/>
</dbReference>
<dbReference type="GO" id="GO:0140448">
    <property type="term" value="P:signaling receptor ligand precursor processing"/>
    <property type="evidence" value="ECO:0000266"/>
    <property type="project" value="MGI"/>
</dbReference>
<dbReference type="CDD" id="cd00054">
    <property type="entry name" value="EGF_CA"/>
    <property type="match status" value="1"/>
</dbReference>
<dbReference type="CDD" id="cd06263">
    <property type="entry name" value="MAM"/>
    <property type="match status" value="1"/>
</dbReference>
<dbReference type="FunFam" id="2.10.25.10:FF:000930">
    <property type="entry name" value="Meprin A subunit"/>
    <property type="match status" value="1"/>
</dbReference>
<dbReference type="FunFam" id="2.60.120.200:FF:000037">
    <property type="entry name" value="Meprin A subunit"/>
    <property type="match status" value="1"/>
</dbReference>
<dbReference type="FunFam" id="2.60.210.10:FF:000009">
    <property type="entry name" value="Meprin A subunit"/>
    <property type="match status" value="1"/>
</dbReference>
<dbReference type="FunFam" id="3.40.390.10:FF:000015">
    <property type="entry name" value="Meprin A subunit"/>
    <property type="match status" value="1"/>
</dbReference>
<dbReference type="Gene3D" id="2.60.120.200">
    <property type="match status" value="1"/>
</dbReference>
<dbReference type="Gene3D" id="2.60.210.10">
    <property type="entry name" value="Apoptosis, Tumor Necrosis Factor Receptor Associated Protein 2, Chain A"/>
    <property type="match status" value="1"/>
</dbReference>
<dbReference type="Gene3D" id="3.40.390.10">
    <property type="entry name" value="Collagenase (Catalytic Domain)"/>
    <property type="match status" value="1"/>
</dbReference>
<dbReference type="Gene3D" id="2.10.25.10">
    <property type="entry name" value="Laminin"/>
    <property type="match status" value="1"/>
</dbReference>
<dbReference type="InterPro" id="IPR013320">
    <property type="entry name" value="ConA-like_dom_sf"/>
</dbReference>
<dbReference type="InterPro" id="IPR000742">
    <property type="entry name" value="EGF-like_dom"/>
</dbReference>
<dbReference type="InterPro" id="IPR000998">
    <property type="entry name" value="MAM_dom"/>
</dbReference>
<dbReference type="InterPro" id="IPR002083">
    <property type="entry name" value="MATH/TRAF_dom"/>
</dbReference>
<dbReference type="InterPro" id="IPR008294">
    <property type="entry name" value="Meprin"/>
</dbReference>
<dbReference type="InterPro" id="IPR024079">
    <property type="entry name" value="MetalloPept_cat_dom_sf"/>
</dbReference>
<dbReference type="InterPro" id="IPR001506">
    <property type="entry name" value="Peptidase_M12A"/>
</dbReference>
<dbReference type="InterPro" id="IPR006026">
    <property type="entry name" value="Peptidase_Metallo"/>
</dbReference>
<dbReference type="InterPro" id="IPR008974">
    <property type="entry name" value="TRAF-like"/>
</dbReference>
<dbReference type="PANTHER" id="PTHR10127">
    <property type="entry name" value="DISCOIDIN, CUB, EGF, LAMININ , AND ZINC METALLOPROTEASE DOMAIN CONTAINING"/>
    <property type="match status" value="1"/>
</dbReference>
<dbReference type="PANTHER" id="PTHR10127:SF824">
    <property type="entry name" value="MEPRIN A SUBUNIT ALPHA"/>
    <property type="match status" value="1"/>
</dbReference>
<dbReference type="Pfam" id="PF01400">
    <property type="entry name" value="Astacin"/>
    <property type="match status" value="1"/>
</dbReference>
<dbReference type="Pfam" id="PF00008">
    <property type="entry name" value="EGF"/>
    <property type="match status" value="1"/>
</dbReference>
<dbReference type="Pfam" id="PF00629">
    <property type="entry name" value="MAM"/>
    <property type="match status" value="1"/>
</dbReference>
<dbReference type="Pfam" id="PF22486">
    <property type="entry name" value="MATH_2"/>
    <property type="match status" value="1"/>
</dbReference>
<dbReference type="PIRSF" id="PIRSF001196">
    <property type="entry name" value="Meprin"/>
    <property type="match status" value="1"/>
</dbReference>
<dbReference type="PRINTS" id="PR00480">
    <property type="entry name" value="ASTACIN"/>
</dbReference>
<dbReference type="PRINTS" id="PR00020">
    <property type="entry name" value="MAMDOMAIN"/>
</dbReference>
<dbReference type="SMART" id="SM00137">
    <property type="entry name" value="MAM"/>
    <property type="match status" value="1"/>
</dbReference>
<dbReference type="SMART" id="SM00061">
    <property type="entry name" value="MATH"/>
    <property type="match status" value="1"/>
</dbReference>
<dbReference type="SMART" id="SM00235">
    <property type="entry name" value="ZnMc"/>
    <property type="match status" value="1"/>
</dbReference>
<dbReference type="SUPFAM" id="SSF49899">
    <property type="entry name" value="Concanavalin A-like lectins/glucanases"/>
    <property type="match status" value="1"/>
</dbReference>
<dbReference type="SUPFAM" id="SSF57196">
    <property type="entry name" value="EGF/Laminin"/>
    <property type="match status" value="1"/>
</dbReference>
<dbReference type="SUPFAM" id="SSF55486">
    <property type="entry name" value="Metalloproteases ('zincins'), catalytic domain"/>
    <property type="match status" value="1"/>
</dbReference>
<dbReference type="SUPFAM" id="SSF49599">
    <property type="entry name" value="TRAF domain-like"/>
    <property type="match status" value="1"/>
</dbReference>
<dbReference type="PROSITE" id="PS51864">
    <property type="entry name" value="ASTACIN"/>
    <property type="match status" value="1"/>
</dbReference>
<dbReference type="PROSITE" id="PS50026">
    <property type="entry name" value="EGF_3"/>
    <property type="match status" value="1"/>
</dbReference>
<dbReference type="PROSITE" id="PS00740">
    <property type="entry name" value="MAM_1"/>
    <property type="match status" value="1"/>
</dbReference>
<dbReference type="PROSITE" id="PS50060">
    <property type="entry name" value="MAM_2"/>
    <property type="match status" value="1"/>
</dbReference>
<dbReference type="PROSITE" id="PS50144">
    <property type="entry name" value="MATH"/>
    <property type="match status" value="1"/>
</dbReference>
<dbReference type="PROSITE" id="PS00142">
    <property type="entry name" value="ZINC_PROTEASE"/>
    <property type="match status" value="1"/>
</dbReference>
<keyword id="KW-0903">Direct protein sequencing</keyword>
<keyword id="KW-1015">Disulfide bond</keyword>
<keyword id="KW-0245">EGF-like domain</keyword>
<keyword id="KW-0325">Glycoprotein</keyword>
<keyword id="KW-0378">Hydrolase</keyword>
<keyword id="KW-0472">Membrane</keyword>
<keyword id="KW-0479">Metal-binding</keyword>
<keyword id="KW-0482">Metalloprotease</keyword>
<keyword id="KW-0645">Protease</keyword>
<keyword id="KW-1185">Reference proteome</keyword>
<keyword id="KW-0732">Signal</keyword>
<keyword id="KW-0812">Transmembrane</keyword>
<keyword id="KW-1133">Transmembrane helix</keyword>
<keyword id="KW-0862">Zinc</keyword>
<keyword id="KW-0865">Zymogen</keyword>
<protein>
    <recommendedName>
        <fullName>Meprin A subunit alpha</fullName>
        <ecNumber>3.4.24.18</ecNumber>
    </recommendedName>
    <alternativeName>
        <fullName>Endopeptidase-2</fullName>
    </alternativeName>
    <alternativeName>
        <fullName>MEP-1</fullName>
    </alternativeName>
</protein>
<accession>P28825</accession>
<accession>B0V2P9</accession>
<accession>Q91WH9</accession>